<comment type="function">
    <text evidence="1">Involved in targeting and insertion of nascent membrane proteins into the cytoplasmic membrane. Binds to the hydrophobic signal sequence of the ribosome-nascent chain (RNC) as it emerges from the ribosomes. The SRP-RNC complex is then targeted to the cytoplasmic membrane where it interacts with the SRP receptor FtsY.</text>
</comment>
<comment type="catalytic activity">
    <reaction evidence="1">
        <text>GTP + H2O = GDP + phosphate + H(+)</text>
        <dbReference type="Rhea" id="RHEA:19669"/>
        <dbReference type="ChEBI" id="CHEBI:15377"/>
        <dbReference type="ChEBI" id="CHEBI:15378"/>
        <dbReference type="ChEBI" id="CHEBI:37565"/>
        <dbReference type="ChEBI" id="CHEBI:43474"/>
        <dbReference type="ChEBI" id="CHEBI:58189"/>
        <dbReference type="EC" id="3.6.5.4"/>
    </reaction>
</comment>
<comment type="subunit">
    <text evidence="1">Part of the signal recognition particle protein translocation system, which is composed of SRP and FtsY. Archaeal SRP consists of a 7S RNA molecule of 300 nucleotides and two protein subunits: SRP54 and SRP19.</text>
</comment>
<comment type="subcellular location">
    <subcellularLocation>
        <location evidence="1">Cytoplasm</location>
    </subcellularLocation>
    <text evidence="1">The SRP-RNC complex is targeted to the cytoplasmic membrane.</text>
</comment>
<comment type="domain">
    <text evidence="1">Composed of three domains: the N-terminal N domain, which is responsible for interactions with the ribosome, the central G domain, which binds GTP, and the C-terminal M domain, which binds the RNA and the signal sequence of the RNC.</text>
</comment>
<comment type="similarity">
    <text evidence="1">Belongs to the GTP-binding SRP family. SRP54 subfamily.</text>
</comment>
<comment type="sequence caution" evidence="2">
    <conflict type="erroneous initiation">
        <sequence resource="EMBL-CDS" id="CAA73234"/>
    </conflict>
</comment>
<sequence length="444" mass="49659">MLDGLRDAVRKFLGSSDYEKAVNEFIKELQIILIKADVNVRLVKDLTDRIKKRITEEKPPSAIEKREWFISIVYDELSRLFGGDKEPEVMPKKLPYIIMLVGVQGSGKTTTSGKLALFYKKKGYKVGLVAADIYRPAAYEQLIQIGQQINIPVYGEPGNKNPIEIATNGLEKFLKEKMNIVIIDTAGRHGYGEEASLLEEMKSMYDKIHPDEVILVIDASIGQKAYDLASRFHQASPIGSLIVSKMDGTAKGGGALSAVIATGAQIKFIGTGEKLDELEVFNPRRFVSRLLGLGDIESIIEKIKSVEDYENLEKRMEDVISGKTKLTLRDIYKQLIALRKMGPLGKIFQMLPGAGILSQVPEEQLKLGEEKIRTFMAIMNSMTYKELDNPSIIDKARMRRIAKGAGVTVEEVKELLKQYQMTNNLLKMVKRRKGLAKLFGGSNQ</sequence>
<name>SRP54_SULAC</name>
<keyword id="KW-0963">Cytoplasm</keyword>
<keyword id="KW-0342">GTP-binding</keyword>
<keyword id="KW-0378">Hydrolase</keyword>
<keyword id="KW-0547">Nucleotide-binding</keyword>
<keyword id="KW-1185">Reference proteome</keyword>
<keyword id="KW-0687">Ribonucleoprotein</keyword>
<keyword id="KW-0694">RNA-binding</keyword>
<keyword id="KW-0733">Signal recognition particle</keyword>
<dbReference type="EC" id="3.6.5.4" evidence="1"/>
<dbReference type="EMBL" id="Y12702">
    <property type="protein sequence ID" value="CAA73234.1"/>
    <property type="status" value="ALT_INIT"/>
    <property type="molecule type" value="Genomic_DNA"/>
</dbReference>
<dbReference type="EMBL" id="CP000077">
    <property type="protein sequence ID" value="AAY80648.1"/>
    <property type="molecule type" value="Genomic_DNA"/>
</dbReference>
<dbReference type="RefSeq" id="WP_011278150.1">
    <property type="nucleotide sequence ID" value="NC_007181.1"/>
</dbReference>
<dbReference type="SMR" id="O07853"/>
<dbReference type="STRING" id="330779.Saci_1310"/>
<dbReference type="GeneID" id="14551815"/>
<dbReference type="KEGG" id="sai:Saci_1310"/>
<dbReference type="PATRIC" id="fig|330779.12.peg.1264"/>
<dbReference type="eggNOG" id="arCOG01228">
    <property type="taxonomic scope" value="Archaea"/>
</dbReference>
<dbReference type="HOGENOM" id="CLU_009301_6_0_2"/>
<dbReference type="Proteomes" id="UP000001018">
    <property type="component" value="Chromosome"/>
</dbReference>
<dbReference type="GO" id="GO:0048500">
    <property type="term" value="C:signal recognition particle"/>
    <property type="evidence" value="ECO:0007669"/>
    <property type="project" value="UniProtKB-UniRule"/>
</dbReference>
<dbReference type="GO" id="GO:0008312">
    <property type="term" value="F:7S RNA binding"/>
    <property type="evidence" value="ECO:0007669"/>
    <property type="project" value="UniProtKB-UniRule"/>
</dbReference>
<dbReference type="GO" id="GO:0016887">
    <property type="term" value="F:ATP hydrolysis activity"/>
    <property type="evidence" value="ECO:0007669"/>
    <property type="project" value="InterPro"/>
</dbReference>
<dbReference type="GO" id="GO:0005525">
    <property type="term" value="F:GTP binding"/>
    <property type="evidence" value="ECO:0007669"/>
    <property type="project" value="UniProtKB-UniRule"/>
</dbReference>
<dbReference type="GO" id="GO:0003924">
    <property type="term" value="F:GTPase activity"/>
    <property type="evidence" value="ECO:0007669"/>
    <property type="project" value="UniProtKB-UniRule"/>
</dbReference>
<dbReference type="GO" id="GO:0006614">
    <property type="term" value="P:SRP-dependent cotranslational protein targeting to membrane"/>
    <property type="evidence" value="ECO:0007669"/>
    <property type="project" value="InterPro"/>
</dbReference>
<dbReference type="CDD" id="cd17875">
    <property type="entry name" value="SRP54_G"/>
    <property type="match status" value="1"/>
</dbReference>
<dbReference type="FunFam" id="3.40.50.300:FF:000022">
    <property type="entry name" value="Signal recognition particle 54 kDa subunit"/>
    <property type="match status" value="1"/>
</dbReference>
<dbReference type="Gene3D" id="3.40.50.300">
    <property type="entry name" value="P-loop containing nucleotide triphosphate hydrolases"/>
    <property type="match status" value="1"/>
</dbReference>
<dbReference type="Gene3D" id="1.20.120.140">
    <property type="entry name" value="Signal recognition particle SRP54, nucleotide-binding domain"/>
    <property type="match status" value="1"/>
</dbReference>
<dbReference type="Gene3D" id="1.10.260.30">
    <property type="entry name" value="Signal recognition particle, SRP54 subunit, M-domain"/>
    <property type="match status" value="1"/>
</dbReference>
<dbReference type="HAMAP" id="MF_00306">
    <property type="entry name" value="SRP54"/>
    <property type="match status" value="1"/>
</dbReference>
<dbReference type="InterPro" id="IPR003593">
    <property type="entry name" value="AAA+_ATPase"/>
</dbReference>
<dbReference type="InterPro" id="IPR027417">
    <property type="entry name" value="P-loop_NTPase"/>
</dbReference>
<dbReference type="InterPro" id="IPR036891">
    <property type="entry name" value="Signal_recog_part_SRP54_M_sf"/>
</dbReference>
<dbReference type="InterPro" id="IPR013822">
    <property type="entry name" value="Signal_recog_particl_SRP54_hlx"/>
</dbReference>
<dbReference type="InterPro" id="IPR004125">
    <property type="entry name" value="Signal_recog_particle_SRP54_M"/>
</dbReference>
<dbReference type="InterPro" id="IPR036225">
    <property type="entry name" value="SRP/SRP_N"/>
</dbReference>
<dbReference type="InterPro" id="IPR022941">
    <property type="entry name" value="SRP54"/>
</dbReference>
<dbReference type="InterPro" id="IPR000897">
    <property type="entry name" value="SRP54_GTPase_dom"/>
</dbReference>
<dbReference type="InterPro" id="IPR042101">
    <property type="entry name" value="SRP54_N_sf"/>
</dbReference>
<dbReference type="PANTHER" id="PTHR11564">
    <property type="entry name" value="SIGNAL RECOGNITION PARTICLE 54K PROTEIN SRP54"/>
    <property type="match status" value="1"/>
</dbReference>
<dbReference type="PANTHER" id="PTHR11564:SF5">
    <property type="entry name" value="SIGNAL RECOGNITION PARTICLE SUBUNIT SRP54"/>
    <property type="match status" value="1"/>
</dbReference>
<dbReference type="Pfam" id="PF00448">
    <property type="entry name" value="SRP54"/>
    <property type="match status" value="1"/>
</dbReference>
<dbReference type="Pfam" id="PF02881">
    <property type="entry name" value="SRP54_N"/>
    <property type="match status" value="1"/>
</dbReference>
<dbReference type="Pfam" id="PF02978">
    <property type="entry name" value="SRP_SPB"/>
    <property type="match status" value="1"/>
</dbReference>
<dbReference type="SMART" id="SM00382">
    <property type="entry name" value="AAA"/>
    <property type="match status" value="1"/>
</dbReference>
<dbReference type="SMART" id="SM00962">
    <property type="entry name" value="SRP54"/>
    <property type="match status" value="1"/>
</dbReference>
<dbReference type="SMART" id="SM00963">
    <property type="entry name" value="SRP54_N"/>
    <property type="match status" value="1"/>
</dbReference>
<dbReference type="SUPFAM" id="SSF47364">
    <property type="entry name" value="Domain of the SRP/SRP receptor G-proteins"/>
    <property type="match status" value="1"/>
</dbReference>
<dbReference type="SUPFAM" id="SSF52540">
    <property type="entry name" value="P-loop containing nucleoside triphosphate hydrolases"/>
    <property type="match status" value="1"/>
</dbReference>
<dbReference type="SUPFAM" id="SSF47446">
    <property type="entry name" value="Signal peptide-binding domain"/>
    <property type="match status" value="1"/>
</dbReference>
<protein>
    <recommendedName>
        <fullName evidence="1">Signal recognition particle 54 kDa protein</fullName>
        <shortName evidence="1">SRP54</shortName>
        <ecNumber evidence="1">3.6.5.4</ecNumber>
    </recommendedName>
</protein>
<proteinExistence type="inferred from homology"/>
<accession>O07853</accession>
<accession>Q4J982</accession>
<evidence type="ECO:0000255" key="1">
    <source>
        <dbReference type="HAMAP-Rule" id="MF_00306"/>
    </source>
</evidence>
<evidence type="ECO:0000305" key="2"/>
<reference key="1">
    <citation type="submission" date="1997-04" db="EMBL/GenBank/DDBJ databases">
        <title>Ffh homologous components of hyperthermophilic archaebacteria.</title>
        <authorList>
            <person name="Moll R."/>
            <person name="Schmidtke S."/>
            <person name="Schaefer G."/>
        </authorList>
    </citation>
    <scope>NUCLEOTIDE SEQUENCE [GENOMIC DNA]</scope>
    <source>
        <strain>ATCC 33909 / DSM 639 / JCM 8929 / NBRC 15157 / NCIMB 11770</strain>
    </source>
</reference>
<reference key="2">
    <citation type="journal article" date="2005" name="J. Bacteriol.">
        <title>The genome of Sulfolobus acidocaldarius, a model organism of the Crenarchaeota.</title>
        <authorList>
            <person name="Chen L."/>
            <person name="Bruegger K."/>
            <person name="Skovgaard M."/>
            <person name="Redder P."/>
            <person name="She Q."/>
            <person name="Torarinsson E."/>
            <person name="Greve B."/>
            <person name="Awayez M."/>
            <person name="Zibat A."/>
            <person name="Klenk H.-P."/>
            <person name="Garrett R.A."/>
        </authorList>
    </citation>
    <scope>NUCLEOTIDE SEQUENCE [LARGE SCALE GENOMIC DNA]</scope>
    <source>
        <strain>ATCC 33909 / DSM 639 / JCM 8929 / NBRC 15157 / NCIMB 11770</strain>
    </source>
</reference>
<gene>
    <name evidence="1" type="primary">srp54</name>
    <name type="synonym">ffh</name>
    <name type="ordered locus">Saci_1310</name>
</gene>
<feature type="chain" id="PRO_0000101186" description="Signal recognition particle 54 kDa protein">
    <location>
        <begin position="1"/>
        <end position="444"/>
    </location>
</feature>
<feature type="binding site" evidence="1">
    <location>
        <begin position="102"/>
        <end position="109"/>
    </location>
    <ligand>
        <name>GTP</name>
        <dbReference type="ChEBI" id="CHEBI:37565"/>
    </ligand>
</feature>
<feature type="binding site" evidence="1">
    <location>
        <begin position="184"/>
        <end position="188"/>
    </location>
    <ligand>
        <name>GTP</name>
        <dbReference type="ChEBI" id="CHEBI:37565"/>
    </ligand>
</feature>
<feature type="binding site" evidence="1">
    <location>
        <begin position="244"/>
        <end position="247"/>
    </location>
    <ligand>
        <name>GTP</name>
        <dbReference type="ChEBI" id="CHEBI:37565"/>
    </ligand>
</feature>
<organism>
    <name type="scientific">Sulfolobus acidocaldarius (strain ATCC 33909 / DSM 639 / JCM 8929 / NBRC 15157 / NCIMB 11770)</name>
    <dbReference type="NCBI Taxonomy" id="330779"/>
    <lineage>
        <taxon>Archaea</taxon>
        <taxon>Thermoproteota</taxon>
        <taxon>Thermoprotei</taxon>
        <taxon>Sulfolobales</taxon>
        <taxon>Sulfolobaceae</taxon>
        <taxon>Sulfolobus</taxon>
    </lineage>
</organism>